<feature type="chain" id="PRO_0000207321" description="Putative type II secretion system L-type protein YghE">
    <location>
        <begin position="1"/>
        <end position="286"/>
    </location>
</feature>
<feature type="transmembrane region" description="Helical" evidence="1">
    <location>
        <begin position="136"/>
        <end position="156"/>
    </location>
</feature>
<organism>
    <name type="scientific">Escherichia coli (strain K12)</name>
    <dbReference type="NCBI Taxonomy" id="83333"/>
    <lineage>
        <taxon>Bacteria</taxon>
        <taxon>Pseudomonadati</taxon>
        <taxon>Pseudomonadota</taxon>
        <taxon>Gammaproteobacteria</taxon>
        <taxon>Enterobacterales</taxon>
        <taxon>Enterobacteriaceae</taxon>
        <taxon>Escherichia</taxon>
    </lineage>
</organism>
<dbReference type="EMBL" id="U28377">
    <property type="protein sequence ID" value="AAA69136.1"/>
    <property type="molecule type" value="Genomic_DNA"/>
</dbReference>
<dbReference type="EMBL" id="U00096">
    <property type="protein sequence ID" value="QNV50515.1"/>
    <property type="molecule type" value="Genomic_DNA"/>
</dbReference>
<dbReference type="PIR" id="G65082">
    <property type="entry name" value="G65082"/>
</dbReference>
<dbReference type="SMR" id="Q46833"/>
<dbReference type="DIP" id="DIP-12203N"/>
<dbReference type="FunCoup" id="Q46833">
    <property type="interactions" value="10"/>
</dbReference>
<dbReference type="IntAct" id="Q46833">
    <property type="interactions" value="1"/>
</dbReference>
<dbReference type="KEGG" id="ecoc:C3026_16245"/>
<dbReference type="PATRIC" id="fig|83333.103.peg.3867"/>
<dbReference type="EchoBASE" id="EB2813"/>
<dbReference type="InParanoid" id="Q46833"/>
<dbReference type="PhylomeDB" id="Q46833"/>
<dbReference type="BioCyc" id="EcoCyc:G7536-MONOMER"/>
<dbReference type="Proteomes" id="UP000000625">
    <property type="component" value="Chromosome"/>
</dbReference>
<dbReference type="GO" id="GO:0009276">
    <property type="term" value="C:Gram-negative-bacterium-type cell wall"/>
    <property type="evidence" value="ECO:0007669"/>
    <property type="project" value="InterPro"/>
</dbReference>
<dbReference type="GO" id="GO:0005886">
    <property type="term" value="C:plasma membrane"/>
    <property type="evidence" value="ECO:0007669"/>
    <property type="project" value="UniProtKB-SubCell"/>
</dbReference>
<dbReference type="GO" id="GO:0015627">
    <property type="term" value="C:type II protein secretion system complex"/>
    <property type="evidence" value="ECO:0007669"/>
    <property type="project" value="InterPro"/>
</dbReference>
<dbReference type="GO" id="GO:0015628">
    <property type="term" value="P:protein secretion by the type II secretion system"/>
    <property type="evidence" value="ECO:0007669"/>
    <property type="project" value="InterPro"/>
</dbReference>
<dbReference type="Gene3D" id="3.30.1360.100">
    <property type="entry name" value="General secretion pathway protein M, EpsM"/>
    <property type="match status" value="1"/>
</dbReference>
<dbReference type="InterPro" id="IPR025691">
    <property type="entry name" value="GspL_pp_dom"/>
</dbReference>
<dbReference type="InterPro" id="IPR007812">
    <property type="entry name" value="T2SS_protein-GspL"/>
</dbReference>
<dbReference type="NCBIfam" id="TIGR01709">
    <property type="entry name" value="typeII_sec_gspL"/>
    <property type="match status" value="1"/>
</dbReference>
<dbReference type="Pfam" id="PF12693">
    <property type="entry name" value="GspL_C"/>
    <property type="match status" value="1"/>
</dbReference>
<protein>
    <recommendedName>
        <fullName>Putative type II secretion system L-type protein YghE</fullName>
    </recommendedName>
    <alternativeName>
        <fullName>Putative general secretion pathway L-type protein YghE</fullName>
    </alternativeName>
</protein>
<gene>
    <name evidence="3" type="primary">yghE</name>
    <name evidence="5" type="ordered locus">b2969</name>
</gene>
<name>YGHE_ECOLI</name>
<sequence length="286" mass="32058">MIHQQHMRNIAQWLQENGITRATVAPDWMSIPCGFMACDAQRVICRIDECRGWSAGLALAPVMFRAQLNEQDLPLSLTVVGIAPEKLSAWAGADAERLTVTALPAITTYGEPEGNLLTGPWQPRVSYRKQWARWRVMILPILLILVALAVERGVTLWSVSEQVAQSRTQAEEQFLTLFPEQKRIVNLRSQVTMALKKYRPQADDTRLLAELSAIASTLKSASLSDIEMRGFTFDQKRQILHLQLRAANFASFDKLRSVLATDYVVQQDALQKEGDAVSGGVTLRRK</sequence>
<evidence type="ECO:0000255" key="1"/>
<evidence type="ECO:0000269" key="2">
    <source>
    </source>
</evidence>
<evidence type="ECO:0000303" key="3">
    <source>
    </source>
</evidence>
<evidence type="ECO:0000305" key="4"/>
<evidence type="ECO:0000312" key="5">
    <source>
        <dbReference type="EMBL" id="QNV50515.1"/>
    </source>
</evidence>
<proteinExistence type="evidence at protein level"/>
<accession>Q46833</accession>
<accession>A0A7H2C768</accession>
<keyword id="KW-0997">Cell inner membrane</keyword>
<keyword id="KW-1003">Cell membrane</keyword>
<keyword id="KW-0472">Membrane</keyword>
<keyword id="KW-0653">Protein transport</keyword>
<keyword id="KW-1185">Reference proteome</keyword>
<keyword id="KW-0812">Transmembrane</keyword>
<keyword id="KW-1133">Transmembrane helix</keyword>
<keyword id="KW-0813">Transport</keyword>
<reference key="1">
    <citation type="journal article" date="1997" name="Science">
        <title>The complete genome sequence of Escherichia coli K-12.</title>
        <authorList>
            <person name="Blattner F.R."/>
            <person name="Plunkett G. III"/>
            <person name="Bloch C.A."/>
            <person name="Perna N.T."/>
            <person name="Burland V."/>
            <person name="Riley M."/>
            <person name="Collado-Vides J."/>
            <person name="Glasner J.D."/>
            <person name="Rode C.K."/>
            <person name="Mayhew G.F."/>
            <person name="Gregor J."/>
            <person name="Davis N.W."/>
            <person name="Kirkpatrick H.A."/>
            <person name="Goeden M.A."/>
            <person name="Rose D.J."/>
            <person name="Mau B."/>
            <person name="Shao Y."/>
        </authorList>
    </citation>
    <scope>NUCLEOTIDE SEQUENCE [LARGE SCALE GENOMIC DNA]</scope>
    <source>
        <strain>K12 / MG1655 / ATCC 47076</strain>
    </source>
</reference>
<reference key="2">
    <citation type="journal article" date="2019" name="MBio">
        <title>Identifying small proteins by ribosome profiling with stalled initiation complexes.</title>
        <authorList>
            <person name="Weaver J."/>
            <person name="Mohammad F."/>
            <person name="Buskirk A.R."/>
            <person name="Storz G."/>
        </authorList>
    </citation>
    <scope>IDENTIFICATION</scope>
    <scope>INDUCTION</scope>
    <source>
        <strain>K12 / MG1655 / ATCC 47076</strain>
    </source>
</reference>
<comment type="function">
    <text evidence="4">Involved in a type II secretion system (T2SS, formerly general secretion pathway, GSP) for the export of folded proteins across the outer membrane.</text>
</comment>
<comment type="subcellular location">
    <subcellularLocation>
        <location evidence="4">Cell inner membrane</location>
    </subcellularLocation>
</comment>
<comment type="induction">
    <text evidence="2">Expressed at low levels in exponential phase in rich medium (at protein level).</text>
</comment>
<comment type="miscellaneous">
    <text evidence="4">In many other E.coli strains this gene is part of a type II secretion system, but in MG1655 the locus is missing a number of genes.</text>
</comment>
<comment type="similarity">
    <text evidence="4">Belongs to the GSP L family.</text>
</comment>